<name>GSH0_MOUSE</name>
<keyword id="KW-0007">Acetylation</keyword>
<keyword id="KW-0317">Glutathione biosynthesis</keyword>
<keyword id="KW-0597">Phosphoprotein</keyword>
<keyword id="KW-1185">Reference proteome</keyword>
<dbReference type="EMBL" id="U95053">
    <property type="protein sequence ID" value="AAB96893.1"/>
    <property type="molecule type" value="mRNA"/>
</dbReference>
<dbReference type="EMBL" id="AF149060">
    <property type="protein sequence ID" value="AAG15424.1"/>
    <property type="molecule type" value="Genomic_DNA"/>
</dbReference>
<dbReference type="EMBL" id="AF149054">
    <property type="protein sequence ID" value="AAG15424.1"/>
    <property type="status" value="JOINED"/>
    <property type="molecule type" value="Genomic_DNA"/>
</dbReference>
<dbReference type="EMBL" id="AF149055">
    <property type="protein sequence ID" value="AAG15424.1"/>
    <property type="status" value="JOINED"/>
    <property type="molecule type" value="Genomic_DNA"/>
</dbReference>
<dbReference type="EMBL" id="AF149056">
    <property type="protein sequence ID" value="AAG15424.1"/>
    <property type="status" value="JOINED"/>
    <property type="molecule type" value="Genomic_DNA"/>
</dbReference>
<dbReference type="EMBL" id="AF149057">
    <property type="protein sequence ID" value="AAG15424.1"/>
    <property type="status" value="JOINED"/>
    <property type="molecule type" value="Genomic_DNA"/>
</dbReference>
<dbReference type="EMBL" id="AF149058">
    <property type="protein sequence ID" value="AAG15424.1"/>
    <property type="status" value="JOINED"/>
    <property type="molecule type" value="Genomic_DNA"/>
</dbReference>
<dbReference type="EMBL" id="AF149059">
    <property type="protein sequence ID" value="AAG15424.1"/>
    <property type="status" value="JOINED"/>
    <property type="molecule type" value="Genomic_DNA"/>
</dbReference>
<dbReference type="EMBL" id="AK028236">
    <property type="protein sequence ID" value="BAC25831.1"/>
    <property type="molecule type" value="mRNA"/>
</dbReference>
<dbReference type="CCDS" id="CCDS17808.1"/>
<dbReference type="RefSeq" id="NP_032155.1">
    <property type="nucleotide sequence ID" value="NM_008129.4"/>
</dbReference>
<dbReference type="SMR" id="O09172"/>
<dbReference type="BioGRID" id="199941">
    <property type="interactions" value="7"/>
</dbReference>
<dbReference type="FunCoup" id="O09172">
    <property type="interactions" value="1334"/>
</dbReference>
<dbReference type="IntAct" id="O09172">
    <property type="interactions" value="1"/>
</dbReference>
<dbReference type="STRING" id="10090.ENSMUSP00000029769"/>
<dbReference type="GlyGen" id="O09172">
    <property type="glycosylation" value="2 sites, 1 N-linked glycan (1 site), 1 O-linked glycan (1 site)"/>
</dbReference>
<dbReference type="iPTMnet" id="O09172"/>
<dbReference type="PhosphoSitePlus" id="O09172"/>
<dbReference type="SwissPalm" id="O09172"/>
<dbReference type="jPOST" id="O09172"/>
<dbReference type="PaxDb" id="10090-ENSMUSP00000029769"/>
<dbReference type="PeptideAtlas" id="O09172"/>
<dbReference type="ProteomicsDB" id="271178"/>
<dbReference type="Pumba" id="O09172"/>
<dbReference type="Antibodypedia" id="4034">
    <property type="antibodies" value="465 antibodies from 37 providers"/>
</dbReference>
<dbReference type="DNASU" id="14630"/>
<dbReference type="Ensembl" id="ENSMUST00000029769.14">
    <property type="protein sequence ID" value="ENSMUSP00000029769.8"/>
    <property type="gene ID" value="ENSMUSG00000028124.17"/>
</dbReference>
<dbReference type="GeneID" id="14630"/>
<dbReference type="KEGG" id="mmu:14630"/>
<dbReference type="UCSC" id="uc008reo.2">
    <property type="organism name" value="mouse"/>
</dbReference>
<dbReference type="AGR" id="MGI:104995"/>
<dbReference type="CTD" id="2730"/>
<dbReference type="MGI" id="MGI:104995">
    <property type="gene designation" value="Gclm"/>
</dbReference>
<dbReference type="VEuPathDB" id="HostDB:ENSMUSG00000028124"/>
<dbReference type="eggNOG" id="KOG3023">
    <property type="taxonomic scope" value="Eukaryota"/>
</dbReference>
<dbReference type="GeneTree" id="ENSGT00510000047658"/>
<dbReference type="HOGENOM" id="CLU_055657_1_0_1"/>
<dbReference type="InParanoid" id="O09172"/>
<dbReference type="OMA" id="AHEWIPL"/>
<dbReference type="OrthoDB" id="5596051at2759"/>
<dbReference type="PhylomeDB" id="O09172"/>
<dbReference type="TreeFam" id="TF105986"/>
<dbReference type="BRENDA" id="6.3.2.2">
    <property type="organism ID" value="3474"/>
</dbReference>
<dbReference type="Reactome" id="R-MMU-174403">
    <property type="pathway name" value="Glutathione synthesis and recycling"/>
</dbReference>
<dbReference type="UniPathway" id="UPA00142">
    <property type="reaction ID" value="UER00209"/>
</dbReference>
<dbReference type="BioGRID-ORCS" id="14630">
    <property type="hits" value="8 hits in 77 CRISPR screens"/>
</dbReference>
<dbReference type="ChiTaRS" id="Gclm">
    <property type="organism name" value="mouse"/>
</dbReference>
<dbReference type="PRO" id="PR:O09172"/>
<dbReference type="Proteomes" id="UP000000589">
    <property type="component" value="Chromosome 3"/>
</dbReference>
<dbReference type="RNAct" id="O09172">
    <property type="molecule type" value="protein"/>
</dbReference>
<dbReference type="Bgee" id="ENSMUSG00000028124">
    <property type="expression patterns" value="Expressed in right kidney and 257 other cell types or tissues"/>
</dbReference>
<dbReference type="ExpressionAtlas" id="O09172">
    <property type="expression patterns" value="baseline and differential"/>
</dbReference>
<dbReference type="GO" id="GO:0017109">
    <property type="term" value="C:glutamate-cysteine ligase complex"/>
    <property type="evidence" value="ECO:0000314"/>
    <property type="project" value="MGI"/>
</dbReference>
<dbReference type="GO" id="GO:0004357">
    <property type="term" value="F:glutamate-cysteine ligase activity"/>
    <property type="evidence" value="ECO:0007669"/>
    <property type="project" value="Ensembl"/>
</dbReference>
<dbReference type="GO" id="GO:0035226">
    <property type="term" value="F:glutamate-cysteine ligase catalytic subunit binding"/>
    <property type="evidence" value="ECO:0000314"/>
    <property type="project" value="MGI"/>
</dbReference>
<dbReference type="GO" id="GO:0044877">
    <property type="term" value="F:protein-containing complex binding"/>
    <property type="evidence" value="ECO:0007669"/>
    <property type="project" value="Ensembl"/>
</dbReference>
<dbReference type="GO" id="GO:0008637">
    <property type="term" value="P:apoptotic mitochondrial changes"/>
    <property type="evidence" value="ECO:0000316"/>
    <property type="project" value="MGI"/>
</dbReference>
<dbReference type="GO" id="GO:0097746">
    <property type="term" value="P:blood vessel diameter maintenance"/>
    <property type="evidence" value="ECO:0000250"/>
    <property type="project" value="UniProtKB"/>
</dbReference>
<dbReference type="GO" id="GO:0044344">
    <property type="term" value="P:cellular response to fibroblast growth factor stimulus"/>
    <property type="evidence" value="ECO:0007669"/>
    <property type="project" value="Ensembl"/>
</dbReference>
<dbReference type="GO" id="GO:0071372">
    <property type="term" value="P:cellular response to follicle-stimulating hormone stimulus"/>
    <property type="evidence" value="ECO:0007669"/>
    <property type="project" value="Ensembl"/>
</dbReference>
<dbReference type="GO" id="GO:0071333">
    <property type="term" value="P:cellular response to glucose stimulus"/>
    <property type="evidence" value="ECO:0007669"/>
    <property type="project" value="Ensembl"/>
</dbReference>
<dbReference type="GO" id="GO:0035729">
    <property type="term" value="P:cellular response to hepatocyte growth factor stimulus"/>
    <property type="evidence" value="ECO:0007669"/>
    <property type="project" value="Ensembl"/>
</dbReference>
<dbReference type="GO" id="GO:1990830">
    <property type="term" value="P:cellular response to leukemia inhibitory factor"/>
    <property type="evidence" value="ECO:0000270"/>
    <property type="project" value="MGI"/>
</dbReference>
<dbReference type="GO" id="GO:0097069">
    <property type="term" value="P:cellular response to thyroxine stimulus"/>
    <property type="evidence" value="ECO:0007669"/>
    <property type="project" value="Ensembl"/>
</dbReference>
<dbReference type="GO" id="GO:0006534">
    <property type="term" value="P:cysteine metabolic process"/>
    <property type="evidence" value="ECO:0000315"/>
    <property type="project" value="MGI"/>
</dbReference>
<dbReference type="GO" id="GO:0006536">
    <property type="term" value="P:glutamate metabolic process"/>
    <property type="evidence" value="ECO:0000250"/>
    <property type="project" value="UniProtKB"/>
</dbReference>
<dbReference type="GO" id="GO:0006750">
    <property type="term" value="P:glutathione biosynthetic process"/>
    <property type="evidence" value="ECO:0000314"/>
    <property type="project" value="MGI"/>
</dbReference>
<dbReference type="GO" id="GO:0006749">
    <property type="term" value="P:glutathione metabolic process"/>
    <property type="evidence" value="ECO:0000315"/>
    <property type="project" value="MGI"/>
</dbReference>
<dbReference type="GO" id="GO:0035733">
    <property type="term" value="P:hepatic stellate cell activation"/>
    <property type="evidence" value="ECO:0007669"/>
    <property type="project" value="Ensembl"/>
</dbReference>
<dbReference type="GO" id="GO:2001237">
    <property type="term" value="P:negative regulation of extrinsic apoptotic signaling pathway"/>
    <property type="evidence" value="ECO:0000316"/>
    <property type="project" value="MGI"/>
</dbReference>
<dbReference type="GO" id="GO:0043524">
    <property type="term" value="P:negative regulation of neuron apoptotic process"/>
    <property type="evidence" value="ECO:0007669"/>
    <property type="project" value="Ensembl"/>
</dbReference>
<dbReference type="GO" id="GO:0051900">
    <property type="term" value="P:regulation of mitochondrial depolarization"/>
    <property type="evidence" value="ECO:0000316"/>
    <property type="project" value="MGI"/>
</dbReference>
<dbReference type="GO" id="GO:0014823">
    <property type="term" value="P:response to activity"/>
    <property type="evidence" value="ECO:0007669"/>
    <property type="project" value="Ensembl"/>
</dbReference>
<dbReference type="GO" id="GO:0044752">
    <property type="term" value="P:response to human chorionic gonadotropin"/>
    <property type="evidence" value="ECO:0007669"/>
    <property type="project" value="Ensembl"/>
</dbReference>
<dbReference type="GO" id="GO:0051409">
    <property type="term" value="P:response to nitrosative stress"/>
    <property type="evidence" value="ECO:0007669"/>
    <property type="project" value="Ensembl"/>
</dbReference>
<dbReference type="GO" id="GO:0007584">
    <property type="term" value="P:response to nutrient"/>
    <property type="evidence" value="ECO:0007669"/>
    <property type="project" value="Ensembl"/>
</dbReference>
<dbReference type="GO" id="GO:0006979">
    <property type="term" value="P:response to oxidative stress"/>
    <property type="evidence" value="ECO:0000315"/>
    <property type="project" value="MGI"/>
</dbReference>
<dbReference type="GO" id="GO:0009410">
    <property type="term" value="P:response to xenobiotic stimulus"/>
    <property type="evidence" value="ECO:0000250"/>
    <property type="project" value="UniProtKB"/>
</dbReference>
<dbReference type="FunFam" id="3.20.20.100:FF:000012">
    <property type="entry name" value="Glutamate--cysteine ligase regulatory subunit"/>
    <property type="match status" value="1"/>
</dbReference>
<dbReference type="Gene3D" id="3.20.20.100">
    <property type="entry name" value="NADP-dependent oxidoreductase domain"/>
    <property type="match status" value="1"/>
</dbReference>
<dbReference type="InterPro" id="IPR032963">
    <property type="entry name" value="Gclm"/>
</dbReference>
<dbReference type="InterPro" id="IPR023210">
    <property type="entry name" value="NADP_OxRdtase_dom"/>
</dbReference>
<dbReference type="InterPro" id="IPR036812">
    <property type="entry name" value="NADP_OxRdtase_dom_sf"/>
</dbReference>
<dbReference type="PANTHER" id="PTHR13295">
    <property type="entry name" value="GLUTAMATE CYSTEINE LIGASE REGULATORY SUBUNIT"/>
    <property type="match status" value="1"/>
</dbReference>
<dbReference type="PANTHER" id="PTHR13295:SF4">
    <property type="entry name" value="GLUTAMATE--CYSTEINE LIGASE REGULATORY SUBUNIT"/>
    <property type="match status" value="1"/>
</dbReference>
<dbReference type="Pfam" id="PF00248">
    <property type="entry name" value="Aldo_ket_red"/>
    <property type="match status" value="1"/>
</dbReference>
<dbReference type="SUPFAM" id="SSF51430">
    <property type="entry name" value="NAD(P)-linked oxidoreductase"/>
    <property type="match status" value="1"/>
</dbReference>
<sequence>MGTDSRAAGALLARASTLHLQTGNLLNWGRLRKKCPSTHSEELRDCIQKTLNEWSSQISPDLVREFPDVLECTMSHAVEKINPDEREEMKVSAKLFIVGSNSSSSTRSAVDMACSVLGVAQLDSVIMASPPIEDGVNLSLEHLQPYWEELENLVQSKKIVAIGTSDLDKTQLEQLYQWAQVKPNSNQVNLASCCVMPPDLTAFAKQFDIQLLTHNDPKELLSEASFQEALQESIPDIEAQDWVPLWLLRYSVIVKSRGIIKSKGYILQAKRRGS</sequence>
<reference key="1">
    <citation type="journal article" date="1997" name="Biochim. Biophys. Acta">
        <title>Molecular cloning and sequencing of the cDNA encoding mouse glutamate-cysteine ligase regulatory subunit.</title>
        <authorList>
            <person name="Reid L.L."/>
            <person name="Botta D."/>
            <person name="Shao J."/>
            <person name="Hudson F.N."/>
            <person name="Kavanagh T.J."/>
        </authorList>
    </citation>
    <scope>NUCLEOTIDE SEQUENCE [MRNA]</scope>
    <source>
        <strain>C57BL/6J</strain>
        <tissue>Kidney</tissue>
    </source>
</reference>
<reference key="2">
    <citation type="submission" date="1999-05" db="EMBL/GenBank/DDBJ databases">
        <title>Mouse glutamate-cysteine ligase regulatory subunit: gene structure and regulation by agents that cause oxidative stress.</title>
        <authorList>
            <person name="Dalton T.P."/>
            <person name="Solis W.A."/>
            <person name="Dieter M.Z."/>
            <person name="Freshwater S."/>
            <person name="Harrer J."/>
            <person name="Shertzer H.G."/>
            <person name="Nebert D.W."/>
        </authorList>
    </citation>
    <scope>NUCLEOTIDE SEQUENCE [GENOMIC DNA]</scope>
    <source>
        <strain>129/SvJ</strain>
    </source>
</reference>
<reference key="3">
    <citation type="journal article" date="2005" name="Science">
        <title>The transcriptional landscape of the mammalian genome.</title>
        <authorList>
            <person name="Carninci P."/>
            <person name="Kasukawa T."/>
            <person name="Katayama S."/>
            <person name="Gough J."/>
            <person name="Frith M.C."/>
            <person name="Maeda N."/>
            <person name="Oyama R."/>
            <person name="Ravasi T."/>
            <person name="Lenhard B."/>
            <person name="Wells C."/>
            <person name="Kodzius R."/>
            <person name="Shimokawa K."/>
            <person name="Bajic V.B."/>
            <person name="Brenner S.E."/>
            <person name="Batalov S."/>
            <person name="Forrest A.R."/>
            <person name="Zavolan M."/>
            <person name="Davis M.J."/>
            <person name="Wilming L.G."/>
            <person name="Aidinis V."/>
            <person name="Allen J.E."/>
            <person name="Ambesi-Impiombato A."/>
            <person name="Apweiler R."/>
            <person name="Aturaliya R.N."/>
            <person name="Bailey T.L."/>
            <person name="Bansal M."/>
            <person name="Baxter L."/>
            <person name="Beisel K.W."/>
            <person name="Bersano T."/>
            <person name="Bono H."/>
            <person name="Chalk A.M."/>
            <person name="Chiu K.P."/>
            <person name="Choudhary V."/>
            <person name="Christoffels A."/>
            <person name="Clutterbuck D.R."/>
            <person name="Crowe M.L."/>
            <person name="Dalla E."/>
            <person name="Dalrymple B.P."/>
            <person name="de Bono B."/>
            <person name="Della Gatta G."/>
            <person name="di Bernardo D."/>
            <person name="Down T."/>
            <person name="Engstrom P."/>
            <person name="Fagiolini M."/>
            <person name="Faulkner G."/>
            <person name="Fletcher C.F."/>
            <person name="Fukushima T."/>
            <person name="Furuno M."/>
            <person name="Futaki S."/>
            <person name="Gariboldi M."/>
            <person name="Georgii-Hemming P."/>
            <person name="Gingeras T.R."/>
            <person name="Gojobori T."/>
            <person name="Green R.E."/>
            <person name="Gustincich S."/>
            <person name="Harbers M."/>
            <person name="Hayashi Y."/>
            <person name="Hensch T.K."/>
            <person name="Hirokawa N."/>
            <person name="Hill D."/>
            <person name="Huminiecki L."/>
            <person name="Iacono M."/>
            <person name="Ikeo K."/>
            <person name="Iwama A."/>
            <person name="Ishikawa T."/>
            <person name="Jakt M."/>
            <person name="Kanapin A."/>
            <person name="Katoh M."/>
            <person name="Kawasawa Y."/>
            <person name="Kelso J."/>
            <person name="Kitamura H."/>
            <person name="Kitano H."/>
            <person name="Kollias G."/>
            <person name="Krishnan S.P."/>
            <person name="Kruger A."/>
            <person name="Kummerfeld S.K."/>
            <person name="Kurochkin I.V."/>
            <person name="Lareau L.F."/>
            <person name="Lazarevic D."/>
            <person name="Lipovich L."/>
            <person name="Liu J."/>
            <person name="Liuni S."/>
            <person name="McWilliam S."/>
            <person name="Madan Babu M."/>
            <person name="Madera M."/>
            <person name="Marchionni L."/>
            <person name="Matsuda H."/>
            <person name="Matsuzawa S."/>
            <person name="Miki H."/>
            <person name="Mignone F."/>
            <person name="Miyake S."/>
            <person name="Morris K."/>
            <person name="Mottagui-Tabar S."/>
            <person name="Mulder N."/>
            <person name="Nakano N."/>
            <person name="Nakauchi H."/>
            <person name="Ng P."/>
            <person name="Nilsson R."/>
            <person name="Nishiguchi S."/>
            <person name="Nishikawa S."/>
            <person name="Nori F."/>
            <person name="Ohara O."/>
            <person name="Okazaki Y."/>
            <person name="Orlando V."/>
            <person name="Pang K.C."/>
            <person name="Pavan W.J."/>
            <person name="Pavesi G."/>
            <person name="Pesole G."/>
            <person name="Petrovsky N."/>
            <person name="Piazza S."/>
            <person name="Reed J."/>
            <person name="Reid J.F."/>
            <person name="Ring B.Z."/>
            <person name="Ringwald M."/>
            <person name="Rost B."/>
            <person name="Ruan Y."/>
            <person name="Salzberg S.L."/>
            <person name="Sandelin A."/>
            <person name="Schneider C."/>
            <person name="Schoenbach C."/>
            <person name="Sekiguchi K."/>
            <person name="Semple C.A."/>
            <person name="Seno S."/>
            <person name="Sessa L."/>
            <person name="Sheng Y."/>
            <person name="Shibata Y."/>
            <person name="Shimada H."/>
            <person name="Shimada K."/>
            <person name="Silva D."/>
            <person name="Sinclair B."/>
            <person name="Sperling S."/>
            <person name="Stupka E."/>
            <person name="Sugiura K."/>
            <person name="Sultana R."/>
            <person name="Takenaka Y."/>
            <person name="Taki K."/>
            <person name="Tammoja K."/>
            <person name="Tan S.L."/>
            <person name="Tang S."/>
            <person name="Taylor M.S."/>
            <person name="Tegner J."/>
            <person name="Teichmann S.A."/>
            <person name="Ueda H.R."/>
            <person name="van Nimwegen E."/>
            <person name="Verardo R."/>
            <person name="Wei C.L."/>
            <person name="Yagi K."/>
            <person name="Yamanishi H."/>
            <person name="Zabarovsky E."/>
            <person name="Zhu S."/>
            <person name="Zimmer A."/>
            <person name="Hide W."/>
            <person name="Bult C."/>
            <person name="Grimmond S.M."/>
            <person name="Teasdale R.D."/>
            <person name="Liu E.T."/>
            <person name="Brusic V."/>
            <person name="Quackenbush J."/>
            <person name="Wahlestedt C."/>
            <person name="Mattick J.S."/>
            <person name="Hume D.A."/>
            <person name="Kai C."/>
            <person name="Sasaki D."/>
            <person name="Tomaru Y."/>
            <person name="Fukuda S."/>
            <person name="Kanamori-Katayama M."/>
            <person name="Suzuki M."/>
            <person name="Aoki J."/>
            <person name="Arakawa T."/>
            <person name="Iida J."/>
            <person name="Imamura K."/>
            <person name="Itoh M."/>
            <person name="Kato T."/>
            <person name="Kawaji H."/>
            <person name="Kawagashira N."/>
            <person name="Kawashima T."/>
            <person name="Kojima M."/>
            <person name="Kondo S."/>
            <person name="Konno H."/>
            <person name="Nakano K."/>
            <person name="Ninomiya N."/>
            <person name="Nishio T."/>
            <person name="Okada M."/>
            <person name="Plessy C."/>
            <person name="Shibata K."/>
            <person name="Shiraki T."/>
            <person name="Suzuki S."/>
            <person name="Tagami M."/>
            <person name="Waki K."/>
            <person name="Watahiki A."/>
            <person name="Okamura-Oho Y."/>
            <person name="Suzuki H."/>
            <person name="Kawai J."/>
            <person name="Hayashizaki Y."/>
        </authorList>
    </citation>
    <scope>NUCLEOTIDE SEQUENCE [LARGE SCALE MRNA]</scope>
    <source>
        <strain>C57BL/6J</strain>
    </source>
</reference>
<reference key="4">
    <citation type="journal article" date="2010" name="Cell">
        <title>A tissue-specific atlas of mouse protein phosphorylation and expression.</title>
        <authorList>
            <person name="Huttlin E.L."/>
            <person name="Jedrychowski M.P."/>
            <person name="Elias J.E."/>
            <person name="Goswami T."/>
            <person name="Rad R."/>
            <person name="Beausoleil S.A."/>
            <person name="Villen J."/>
            <person name="Haas W."/>
            <person name="Sowa M.E."/>
            <person name="Gygi S.P."/>
        </authorList>
    </citation>
    <scope>PHOSPHORYLATION [LARGE SCALE ANALYSIS] AT SER-59</scope>
    <scope>IDENTIFICATION BY MASS SPECTROMETRY [LARGE SCALE ANALYSIS]</scope>
    <source>
        <tissue>Brain</tissue>
        <tissue>Brown adipose tissue</tissue>
        <tissue>Heart</tissue>
        <tissue>Kidney</tissue>
        <tissue>Liver</tissue>
        <tissue>Lung</tissue>
        <tissue>Pancreas</tissue>
        <tissue>Spleen</tissue>
        <tissue>Testis</tissue>
    </source>
</reference>
<comment type="pathway">
    <text>Sulfur metabolism; glutathione biosynthesis; glutathione from L-cysteine and L-glutamate: step 1/2.</text>
</comment>
<comment type="subunit">
    <text>Heterodimer of a catalytic heavy chain and a regulatory light chain.</text>
</comment>
<comment type="similarity">
    <text evidence="2">Belongs to the aldo/keto reductase family. Glutamate--cysteine ligase light chain subfamily.</text>
</comment>
<gene>
    <name type="primary">Gclm</name>
    <name type="synonym">Glclr</name>
</gene>
<feature type="chain" id="PRO_0000192574" description="Glutamate--cysteine ligase regulatory subunit">
    <location>
        <begin position="1"/>
        <end position="274"/>
    </location>
</feature>
<feature type="modified residue" description="Phosphoserine" evidence="3">
    <location>
        <position position="59"/>
    </location>
</feature>
<feature type="modified residue" description="N6-acetyllysine" evidence="1">
    <location>
        <position position="263"/>
    </location>
</feature>
<protein>
    <recommendedName>
        <fullName>Glutamate--cysteine ligase regulatory subunit</fullName>
    </recommendedName>
    <alternativeName>
        <fullName>GCS light chain</fullName>
    </alternativeName>
    <alternativeName>
        <fullName>Gamma-ECS regulatory subunit</fullName>
    </alternativeName>
    <alternativeName>
        <fullName>Gamma-glutamylcysteine synthetase regulatory subunit</fullName>
    </alternativeName>
    <alternativeName>
        <fullName>Glutamate--cysteine ligase modifier subunit</fullName>
    </alternativeName>
</protein>
<accession>O09172</accession>
<organism>
    <name type="scientific">Mus musculus</name>
    <name type="common">Mouse</name>
    <dbReference type="NCBI Taxonomy" id="10090"/>
    <lineage>
        <taxon>Eukaryota</taxon>
        <taxon>Metazoa</taxon>
        <taxon>Chordata</taxon>
        <taxon>Craniata</taxon>
        <taxon>Vertebrata</taxon>
        <taxon>Euteleostomi</taxon>
        <taxon>Mammalia</taxon>
        <taxon>Eutheria</taxon>
        <taxon>Euarchontoglires</taxon>
        <taxon>Glires</taxon>
        <taxon>Rodentia</taxon>
        <taxon>Myomorpha</taxon>
        <taxon>Muroidea</taxon>
        <taxon>Muridae</taxon>
        <taxon>Murinae</taxon>
        <taxon>Mus</taxon>
        <taxon>Mus</taxon>
    </lineage>
</organism>
<proteinExistence type="evidence at protein level"/>
<evidence type="ECO:0000250" key="1">
    <source>
        <dbReference type="UniProtKB" id="P48507"/>
    </source>
</evidence>
<evidence type="ECO:0000305" key="2"/>
<evidence type="ECO:0007744" key="3">
    <source>
    </source>
</evidence>